<gene>
    <name evidence="1" type="primary">rbfA</name>
    <name type="ordered locus">AZC_0021</name>
</gene>
<protein>
    <recommendedName>
        <fullName evidence="1">Ribosome-binding factor A</fullName>
    </recommendedName>
</protein>
<accession>A8IG22</accession>
<comment type="function">
    <text evidence="1">One of several proteins that assist in the late maturation steps of the functional core of the 30S ribosomal subunit. Associates with free 30S ribosomal subunits (but not with 30S subunits that are part of 70S ribosomes or polysomes). Required for efficient processing of 16S rRNA. May interact with the 5'-terminal helix region of 16S rRNA.</text>
</comment>
<comment type="subunit">
    <text evidence="1">Monomer. Binds 30S ribosomal subunits, but not 50S ribosomal subunits or 70S ribosomes.</text>
</comment>
<comment type="subcellular location">
    <subcellularLocation>
        <location evidence="1">Cytoplasm</location>
    </subcellularLocation>
</comment>
<comment type="similarity">
    <text evidence="1">Belongs to the RbfA family.</text>
</comment>
<proteinExistence type="inferred from homology"/>
<keyword id="KW-0963">Cytoplasm</keyword>
<keyword id="KW-1185">Reference proteome</keyword>
<keyword id="KW-0690">Ribosome biogenesis</keyword>
<reference key="1">
    <citation type="submission" date="2007-04" db="EMBL/GenBank/DDBJ databases">
        <title>Complete genome sequence of the nitrogen-fixing bacterium Azorhizobium caulinodans ORS571.</title>
        <authorList>
            <person name="Lee K.B."/>
            <person name="Backer P.D."/>
            <person name="Aono T."/>
            <person name="Liu C.T."/>
            <person name="Suzuki S."/>
            <person name="Suzuki T."/>
            <person name="Kaneko T."/>
            <person name="Yamada M."/>
            <person name="Tabata S."/>
            <person name="Kupfer D.M."/>
            <person name="Najar F.Z."/>
            <person name="Wiley G.B."/>
            <person name="Roe B."/>
            <person name="Binnewies T."/>
            <person name="Ussery D."/>
            <person name="Vereecke D."/>
            <person name="Gevers D."/>
            <person name="Holsters M."/>
            <person name="Oyaizu H."/>
        </authorList>
    </citation>
    <scope>NUCLEOTIDE SEQUENCE [LARGE SCALE GENOMIC DNA]</scope>
    <source>
        <strain>ATCC 43989 / DSM 5975 / JCM 20966 / LMG 6465 / NBRC 14845 / NCIMB 13405 / ORS 571</strain>
    </source>
</reference>
<sequence length="145" mass="15935">MKTQDRSGSGPSQRMLRVGELVRHALADALQRGDHLDPALAGTIITVPEVRMSPDLKIATCFVMPLGGKDVNTVIKLLAANQKLLRTEVARRVELKSVPSLRFLRDTSFDEGARIDALLRRPDVARDLDTETDAEAGSETTKEED</sequence>
<organism>
    <name type="scientific">Azorhizobium caulinodans (strain ATCC 43989 / DSM 5975 / JCM 20966 / LMG 6465 / NBRC 14845 / NCIMB 13405 / ORS 571)</name>
    <dbReference type="NCBI Taxonomy" id="438753"/>
    <lineage>
        <taxon>Bacteria</taxon>
        <taxon>Pseudomonadati</taxon>
        <taxon>Pseudomonadota</taxon>
        <taxon>Alphaproteobacteria</taxon>
        <taxon>Hyphomicrobiales</taxon>
        <taxon>Xanthobacteraceae</taxon>
        <taxon>Azorhizobium</taxon>
    </lineage>
</organism>
<evidence type="ECO:0000255" key="1">
    <source>
        <dbReference type="HAMAP-Rule" id="MF_00003"/>
    </source>
</evidence>
<evidence type="ECO:0000256" key="2">
    <source>
        <dbReference type="SAM" id="MobiDB-lite"/>
    </source>
</evidence>
<feature type="chain" id="PRO_0000321200" description="Ribosome-binding factor A">
    <location>
        <begin position="1"/>
        <end position="145"/>
    </location>
</feature>
<feature type="region of interest" description="Disordered" evidence="2">
    <location>
        <begin position="126"/>
        <end position="145"/>
    </location>
</feature>
<feature type="compositionally biased region" description="Acidic residues" evidence="2">
    <location>
        <begin position="130"/>
        <end position="145"/>
    </location>
</feature>
<name>RBFA_AZOC5</name>
<dbReference type="EMBL" id="AP009384">
    <property type="protein sequence ID" value="BAF86019.1"/>
    <property type="molecule type" value="Genomic_DNA"/>
</dbReference>
<dbReference type="RefSeq" id="WP_012168552.1">
    <property type="nucleotide sequence ID" value="NC_009937.1"/>
</dbReference>
<dbReference type="SMR" id="A8IG22"/>
<dbReference type="STRING" id="438753.AZC_0021"/>
<dbReference type="KEGG" id="azc:AZC_0021"/>
<dbReference type="eggNOG" id="COG0858">
    <property type="taxonomic scope" value="Bacteria"/>
</dbReference>
<dbReference type="HOGENOM" id="CLU_089475_1_0_5"/>
<dbReference type="Proteomes" id="UP000000270">
    <property type="component" value="Chromosome"/>
</dbReference>
<dbReference type="GO" id="GO:0005829">
    <property type="term" value="C:cytosol"/>
    <property type="evidence" value="ECO:0007669"/>
    <property type="project" value="TreeGrafter"/>
</dbReference>
<dbReference type="GO" id="GO:0043024">
    <property type="term" value="F:ribosomal small subunit binding"/>
    <property type="evidence" value="ECO:0007669"/>
    <property type="project" value="TreeGrafter"/>
</dbReference>
<dbReference type="GO" id="GO:0030490">
    <property type="term" value="P:maturation of SSU-rRNA"/>
    <property type="evidence" value="ECO:0007669"/>
    <property type="project" value="UniProtKB-UniRule"/>
</dbReference>
<dbReference type="Gene3D" id="3.30.300.20">
    <property type="match status" value="1"/>
</dbReference>
<dbReference type="HAMAP" id="MF_00003">
    <property type="entry name" value="RbfA"/>
    <property type="match status" value="1"/>
</dbReference>
<dbReference type="InterPro" id="IPR015946">
    <property type="entry name" value="KH_dom-like_a/b"/>
</dbReference>
<dbReference type="InterPro" id="IPR000238">
    <property type="entry name" value="RbfA"/>
</dbReference>
<dbReference type="InterPro" id="IPR023799">
    <property type="entry name" value="RbfA_dom_sf"/>
</dbReference>
<dbReference type="InterPro" id="IPR020053">
    <property type="entry name" value="Ribosome-bd_factorA_CS"/>
</dbReference>
<dbReference type="NCBIfam" id="NF001802">
    <property type="entry name" value="PRK00521.2-5"/>
    <property type="match status" value="1"/>
</dbReference>
<dbReference type="NCBIfam" id="TIGR00082">
    <property type="entry name" value="rbfA"/>
    <property type="match status" value="1"/>
</dbReference>
<dbReference type="PANTHER" id="PTHR33515">
    <property type="entry name" value="RIBOSOME-BINDING FACTOR A, CHLOROPLASTIC-RELATED"/>
    <property type="match status" value="1"/>
</dbReference>
<dbReference type="PANTHER" id="PTHR33515:SF1">
    <property type="entry name" value="RIBOSOME-BINDING FACTOR A, CHLOROPLASTIC-RELATED"/>
    <property type="match status" value="1"/>
</dbReference>
<dbReference type="Pfam" id="PF02033">
    <property type="entry name" value="RBFA"/>
    <property type="match status" value="1"/>
</dbReference>
<dbReference type="SUPFAM" id="SSF89919">
    <property type="entry name" value="Ribosome-binding factor A, RbfA"/>
    <property type="match status" value="1"/>
</dbReference>
<dbReference type="PROSITE" id="PS01319">
    <property type="entry name" value="RBFA"/>
    <property type="match status" value="1"/>
</dbReference>